<name>ISPT_LISMO</name>
<evidence type="ECO:0000255" key="1">
    <source>
        <dbReference type="HAMAP-Rule" id="MF_01139"/>
    </source>
</evidence>
<gene>
    <name evidence="1" type="primary">uppS</name>
    <name type="ordered locus">lmo1315</name>
</gene>
<proteinExistence type="inferred from homology"/>
<feature type="chain" id="PRO_0000123636" description="Isoprenyl transferase">
    <location>
        <begin position="1"/>
        <end position="252"/>
    </location>
</feature>
<feature type="active site" evidence="1">
    <location>
        <position position="32"/>
    </location>
</feature>
<feature type="active site" description="Proton acceptor" evidence="1">
    <location>
        <position position="80"/>
    </location>
</feature>
<feature type="binding site" evidence="1">
    <location>
        <position position="32"/>
    </location>
    <ligand>
        <name>Mg(2+)</name>
        <dbReference type="ChEBI" id="CHEBI:18420"/>
    </ligand>
</feature>
<feature type="binding site" evidence="1">
    <location>
        <begin position="33"/>
        <end position="36"/>
    </location>
    <ligand>
        <name>substrate</name>
    </ligand>
</feature>
<feature type="binding site" evidence="1">
    <location>
        <position position="37"/>
    </location>
    <ligand>
        <name>substrate</name>
    </ligand>
</feature>
<feature type="binding site" evidence="1">
    <location>
        <position position="45"/>
    </location>
    <ligand>
        <name>substrate</name>
    </ligand>
</feature>
<feature type="binding site" evidence="1">
    <location>
        <position position="49"/>
    </location>
    <ligand>
        <name>substrate</name>
    </ligand>
</feature>
<feature type="binding site" evidence="1">
    <location>
        <begin position="77"/>
        <end position="79"/>
    </location>
    <ligand>
        <name>substrate</name>
    </ligand>
</feature>
<feature type="binding site" evidence="1">
    <location>
        <position position="81"/>
    </location>
    <ligand>
        <name>substrate</name>
    </ligand>
</feature>
<feature type="binding site" evidence="1">
    <location>
        <position position="83"/>
    </location>
    <ligand>
        <name>substrate</name>
    </ligand>
</feature>
<feature type="binding site" evidence="1">
    <location>
        <position position="200"/>
    </location>
    <ligand>
        <name>substrate</name>
    </ligand>
</feature>
<feature type="binding site" evidence="1">
    <location>
        <begin position="206"/>
        <end position="208"/>
    </location>
    <ligand>
        <name>substrate</name>
    </ligand>
</feature>
<feature type="binding site" evidence="1">
    <location>
        <position position="219"/>
    </location>
    <ligand>
        <name>Mg(2+)</name>
        <dbReference type="ChEBI" id="CHEBI:18420"/>
    </ligand>
</feature>
<keyword id="KW-0460">Magnesium</keyword>
<keyword id="KW-0479">Metal-binding</keyword>
<keyword id="KW-1185">Reference proteome</keyword>
<keyword id="KW-0808">Transferase</keyword>
<accession>Q8Y7G6</accession>
<protein>
    <recommendedName>
        <fullName evidence="1">Isoprenyl transferase</fullName>
        <ecNumber evidence="1">2.5.1.-</ecNumber>
    </recommendedName>
</protein>
<comment type="function">
    <text evidence="1">Catalyzes the condensation of isopentenyl diphosphate (IPP) with allylic pyrophosphates generating different type of terpenoids.</text>
</comment>
<comment type="cofactor">
    <cofactor evidence="1">
        <name>Mg(2+)</name>
        <dbReference type="ChEBI" id="CHEBI:18420"/>
    </cofactor>
    <text evidence="1">Binds 2 magnesium ions per subunit.</text>
</comment>
<comment type="subunit">
    <text evidence="1">Homodimer.</text>
</comment>
<comment type="similarity">
    <text evidence="1">Belongs to the UPP synthase family.</text>
</comment>
<sequence length="252" mass="29017">MFKKLFRQDENILNSELAEDLPIPRHVAIIMDGNGRWAKKRFLPRIAGHKEGMDVVKRVTRYANAIGIDVLTLYAFSTENWKRPTDEVDFLMKLPVEFFDSFVPELIEENVRVNVMGYRENLPDHTMRAVEKAIADTAHCTGLTLNFALNYGGRSEIITAAKEAMKELELEGKSADDLTEEKLNDHLMSSGLGDPDLLIRTSGELRLSNFMLWQLAYSEFYFTDTHWPDFSKEDFLQAIIEYQNRSRRFGGL</sequence>
<dbReference type="EC" id="2.5.1.-" evidence="1"/>
<dbReference type="EMBL" id="AL591978">
    <property type="protein sequence ID" value="CAC99393.1"/>
    <property type="molecule type" value="Genomic_DNA"/>
</dbReference>
<dbReference type="PIR" id="AC1239">
    <property type="entry name" value="AC1239"/>
</dbReference>
<dbReference type="RefSeq" id="NP_464840.1">
    <property type="nucleotide sequence ID" value="NC_003210.1"/>
</dbReference>
<dbReference type="RefSeq" id="WP_003732812.1">
    <property type="nucleotide sequence ID" value="NZ_CP149495.1"/>
</dbReference>
<dbReference type="SMR" id="Q8Y7G6"/>
<dbReference type="STRING" id="169963.gene:17593972"/>
<dbReference type="PaxDb" id="169963-lmo1315"/>
<dbReference type="EnsemblBacteria" id="CAC99393">
    <property type="protein sequence ID" value="CAC99393"/>
    <property type="gene ID" value="CAC99393"/>
</dbReference>
<dbReference type="GeneID" id="987694"/>
<dbReference type="KEGG" id="lmo:lmo1315"/>
<dbReference type="PATRIC" id="fig|169963.11.peg.1352"/>
<dbReference type="eggNOG" id="COG0020">
    <property type="taxonomic scope" value="Bacteria"/>
</dbReference>
<dbReference type="HOGENOM" id="CLU_038505_1_1_9"/>
<dbReference type="OrthoDB" id="4191603at2"/>
<dbReference type="PhylomeDB" id="Q8Y7G6"/>
<dbReference type="BioCyc" id="LMON169963:LMO1315-MONOMER"/>
<dbReference type="Proteomes" id="UP000000817">
    <property type="component" value="Chromosome"/>
</dbReference>
<dbReference type="GO" id="GO:0005829">
    <property type="term" value="C:cytosol"/>
    <property type="evidence" value="ECO:0000318"/>
    <property type="project" value="GO_Central"/>
</dbReference>
<dbReference type="GO" id="GO:0008834">
    <property type="term" value="F:ditrans,polycis-undecaprenyl-diphosphate synthase [(2E,6E)-farnesyl-diphosphate specific] activity"/>
    <property type="evidence" value="ECO:0000318"/>
    <property type="project" value="GO_Central"/>
</dbReference>
<dbReference type="GO" id="GO:0000287">
    <property type="term" value="F:magnesium ion binding"/>
    <property type="evidence" value="ECO:0000318"/>
    <property type="project" value="GO_Central"/>
</dbReference>
<dbReference type="GO" id="GO:0030145">
    <property type="term" value="F:manganese ion binding"/>
    <property type="evidence" value="ECO:0000318"/>
    <property type="project" value="GO_Central"/>
</dbReference>
<dbReference type="GO" id="GO:0016094">
    <property type="term" value="P:polyprenol biosynthetic process"/>
    <property type="evidence" value="ECO:0000318"/>
    <property type="project" value="GO_Central"/>
</dbReference>
<dbReference type="CDD" id="cd00475">
    <property type="entry name" value="Cis_IPPS"/>
    <property type="match status" value="1"/>
</dbReference>
<dbReference type="FunFam" id="3.40.1180.10:FF:000001">
    <property type="entry name" value="(2E,6E)-farnesyl-diphosphate-specific ditrans,polycis-undecaprenyl-diphosphate synthase"/>
    <property type="match status" value="1"/>
</dbReference>
<dbReference type="Gene3D" id="3.40.1180.10">
    <property type="entry name" value="Decaprenyl diphosphate synthase-like"/>
    <property type="match status" value="1"/>
</dbReference>
<dbReference type="HAMAP" id="MF_01139">
    <property type="entry name" value="ISPT"/>
    <property type="match status" value="1"/>
</dbReference>
<dbReference type="InterPro" id="IPR001441">
    <property type="entry name" value="UPP_synth-like"/>
</dbReference>
<dbReference type="InterPro" id="IPR018520">
    <property type="entry name" value="UPP_synth-like_CS"/>
</dbReference>
<dbReference type="InterPro" id="IPR036424">
    <property type="entry name" value="UPP_synth-like_sf"/>
</dbReference>
<dbReference type="NCBIfam" id="NF011405">
    <property type="entry name" value="PRK14830.1"/>
    <property type="match status" value="1"/>
</dbReference>
<dbReference type="NCBIfam" id="TIGR00055">
    <property type="entry name" value="uppS"/>
    <property type="match status" value="1"/>
</dbReference>
<dbReference type="PANTHER" id="PTHR10291:SF0">
    <property type="entry name" value="DEHYDRODOLICHYL DIPHOSPHATE SYNTHASE 2"/>
    <property type="match status" value="1"/>
</dbReference>
<dbReference type="PANTHER" id="PTHR10291">
    <property type="entry name" value="DEHYDRODOLICHYL DIPHOSPHATE SYNTHASE FAMILY MEMBER"/>
    <property type="match status" value="1"/>
</dbReference>
<dbReference type="Pfam" id="PF01255">
    <property type="entry name" value="Prenyltransf"/>
    <property type="match status" value="1"/>
</dbReference>
<dbReference type="SUPFAM" id="SSF64005">
    <property type="entry name" value="Undecaprenyl diphosphate synthase"/>
    <property type="match status" value="1"/>
</dbReference>
<dbReference type="PROSITE" id="PS01066">
    <property type="entry name" value="UPP_SYNTHASE"/>
    <property type="match status" value="1"/>
</dbReference>
<reference key="1">
    <citation type="journal article" date="2001" name="Science">
        <title>Comparative genomics of Listeria species.</title>
        <authorList>
            <person name="Glaser P."/>
            <person name="Frangeul L."/>
            <person name="Buchrieser C."/>
            <person name="Rusniok C."/>
            <person name="Amend A."/>
            <person name="Baquero F."/>
            <person name="Berche P."/>
            <person name="Bloecker H."/>
            <person name="Brandt P."/>
            <person name="Chakraborty T."/>
            <person name="Charbit A."/>
            <person name="Chetouani F."/>
            <person name="Couve E."/>
            <person name="de Daruvar A."/>
            <person name="Dehoux P."/>
            <person name="Domann E."/>
            <person name="Dominguez-Bernal G."/>
            <person name="Duchaud E."/>
            <person name="Durant L."/>
            <person name="Dussurget O."/>
            <person name="Entian K.-D."/>
            <person name="Fsihi H."/>
            <person name="Garcia-del Portillo F."/>
            <person name="Garrido P."/>
            <person name="Gautier L."/>
            <person name="Goebel W."/>
            <person name="Gomez-Lopez N."/>
            <person name="Hain T."/>
            <person name="Hauf J."/>
            <person name="Jackson D."/>
            <person name="Jones L.-M."/>
            <person name="Kaerst U."/>
            <person name="Kreft J."/>
            <person name="Kuhn M."/>
            <person name="Kunst F."/>
            <person name="Kurapkat G."/>
            <person name="Madueno E."/>
            <person name="Maitournam A."/>
            <person name="Mata Vicente J."/>
            <person name="Ng E."/>
            <person name="Nedjari H."/>
            <person name="Nordsiek G."/>
            <person name="Novella S."/>
            <person name="de Pablos B."/>
            <person name="Perez-Diaz J.-C."/>
            <person name="Purcell R."/>
            <person name="Remmel B."/>
            <person name="Rose M."/>
            <person name="Schlueter T."/>
            <person name="Simoes N."/>
            <person name="Tierrez A."/>
            <person name="Vazquez-Boland J.-A."/>
            <person name="Voss H."/>
            <person name="Wehland J."/>
            <person name="Cossart P."/>
        </authorList>
    </citation>
    <scope>NUCLEOTIDE SEQUENCE [LARGE SCALE GENOMIC DNA]</scope>
    <source>
        <strain>ATCC BAA-679 / EGD-e</strain>
    </source>
</reference>
<organism>
    <name type="scientific">Listeria monocytogenes serovar 1/2a (strain ATCC BAA-679 / EGD-e)</name>
    <dbReference type="NCBI Taxonomy" id="169963"/>
    <lineage>
        <taxon>Bacteria</taxon>
        <taxon>Bacillati</taxon>
        <taxon>Bacillota</taxon>
        <taxon>Bacilli</taxon>
        <taxon>Bacillales</taxon>
        <taxon>Listeriaceae</taxon>
        <taxon>Listeria</taxon>
    </lineage>
</organism>